<comment type="function">
    <text evidence="1">Catalyzes the conversion of dihydroorotate to orotate with NAD(+) as electron acceptor.</text>
</comment>
<comment type="catalytic activity">
    <reaction>
        <text>(S)-dihydroorotate + NAD(+) = orotate + NADH + H(+)</text>
        <dbReference type="Rhea" id="RHEA:13513"/>
        <dbReference type="ChEBI" id="CHEBI:15378"/>
        <dbReference type="ChEBI" id="CHEBI:30839"/>
        <dbReference type="ChEBI" id="CHEBI:30864"/>
        <dbReference type="ChEBI" id="CHEBI:57540"/>
        <dbReference type="ChEBI" id="CHEBI:57945"/>
        <dbReference type="EC" id="1.3.1.14"/>
    </reaction>
</comment>
<comment type="cofactor">
    <cofactor evidence="1">
        <name>FMN</name>
        <dbReference type="ChEBI" id="CHEBI:58210"/>
    </cofactor>
    <text evidence="1">Binds 1 FMN per subunit.</text>
</comment>
<comment type="pathway">
    <text>Pyrimidine metabolism; UMP biosynthesis via de novo pathway; orotate from (S)-dihydroorotate (NAD(+) route): step 1/1.</text>
</comment>
<comment type="subunit">
    <text evidence="1">Heterotetramer of 2 PyrK and 2 PyrD type B subunits.</text>
</comment>
<comment type="subcellular location">
    <subcellularLocation>
        <location evidence="1">Cytoplasm</location>
    </subcellularLocation>
</comment>
<comment type="similarity">
    <text evidence="2">Belongs to the dihydroorotate dehydrogenase family. Type 1 subfamily.</text>
</comment>
<evidence type="ECO:0000250" key="1"/>
<evidence type="ECO:0000305" key="2"/>
<keyword id="KW-0963">Cytoplasm</keyword>
<keyword id="KW-0285">Flavoprotein</keyword>
<keyword id="KW-0288">FMN</keyword>
<keyword id="KW-0520">NAD</keyword>
<keyword id="KW-0560">Oxidoreductase</keyword>
<keyword id="KW-0665">Pyrimidine biosynthesis</keyword>
<keyword id="KW-1185">Reference proteome</keyword>
<proteinExistence type="inferred from homology"/>
<feature type="chain" id="PRO_0000148400" description="Dihydroorotate dehydrogenase B (NAD(+)), catalytic subunit">
    <location>
        <begin position="1"/>
        <end position="304"/>
    </location>
</feature>
<feature type="active site" description="Nucleophile">
    <location>
        <position position="130"/>
    </location>
</feature>
<feature type="binding site" evidence="1">
    <location>
        <position position="21"/>
    </location>
    <ligand>
        <name>FMN</name>
        <dbReference type="ChEBI" id="CHEBI:58210"/>
    </ligand>
</feature>
<feature type="binding site" evidence="1">
    <location>
        <begin position="45"/>
        <end position="46"/>
    </location>
    <ligand>
        <name>FMN</name>
        <dbReference type="ChEBI" id="CHEBI:58210"/>
    </ligand>
</feature>
<feature type="binding site" evidence="1">
    <location>
        <position position="45"/>
    </location>
    <ligand>
        <name>substrate</name>
    </ligand>
</feature>
<feature type="binding site" evidence="1">
    <location>
        <begin position="69"/>
        <end position="73"/>
    </location>
    <ligand>
        <name>substrate</name>
    </ligand>
</feature>
<feature type="binding site" evidence="1">
    <location>
        <position position="99"/>
    </location>
    <ligand>
        <name>FMN</name>
        <dbReference type="ChEBI" id="CHEBI:58210"/>
    </ligand>
</feature>
<feature type="binding site" evidence="1">
    <location>
        <position position="127"/>
    </location>
    <ligand>
        <name>FMN</name>
        <dbReference type="ChEBI" id="CHEBI:58210"/>
    </ligand>
</feature>
<feature type="binding site" evidence="1">
    <location>
        <position position="127"/>
    </location>
    <ligand>
        <name>substrate</name>
    </ligand>
</feature>
<feature type="binding site" evidence="1">
    <location>
        <position position="165"/>
    </location>
    <ligand>
        <name>FMN</name>
        <dbReference type="ChEBI" id="CHEBI:58210"/>
    </ligand>
</feature>
<feature type="binding site" evidence="1">
    <location>
        <position position="191"/>
    </location>
    <ligand>
        <name>FMN</name>
        <dbReference type="ChEBI" id="CHEBI:58210"/>
    </ligand>
</feature>
<feature type="binding site" evidence="1">
    <location>
        <begin position="192"/>
        <end position="193"/>
    </location>
    <ligand>
        <name>substrate</name>
    </ligand>
</feature>
<feature type="binding site" evidence="1">
    <location>
        <position position="217"/>
    </location>
    <ligand>
        <name>FMN</name>
        <dbReference type="ChEBI" id="CHEBI:58210"/>
    </ligand>
</feature>
<feature type="binding site" evidence="1">
    <location>
        <begin position="243"/>
        <end position="244"/>
    </location>
    <ligand>
        <name>FMN</name>
        <dbReference type="ChEBI" id="CHEBI:58210"/>
    </ligand>
</feature>
<feature type="binding site" evidence="1">
    <location>
        <begin position="265"/>
        <end position="266"/>
    </location>
    <ligand>
        <name>FMN</name>
        <dbReference type="ChEBI" id="CHEBI:58210"/>
    </ligand>
</feature>
<sequence>MNRLAVEIPGLSLKNPIMPASGCFGFGQEYSKYYDLNELGAIMAKAVTPEPRLGNPTPRVAETASGMLNAIGLQNPGLEHVLAHELPFLEQFETPIIANVAGATEDDYVQVCARIGESKAVKAIELNISCPNVKHGGIAFGTDPEVAHRLTKAVKNVASVPVYVKLSPNVADIVSIAQAIEAAGADGLTMINTLLGMRIDLKTRKPIIANGTGGLSGPAIKPVAIRMIHQVRAVSNIPIIGMGGVQTVDDVLEFLIAGADAVAVGTMNFTDPFICPKLISELPKRMDALGISSLQDLKKERTNQ</sequence>
<gene>
    <name type="primary">pyrD</name>
    <name type="ordered locus">lmo1833</name>
</gene>
<name>PYRDB_LISMO</name>
<organism>
    <name type="scientific">Listeria monocytogenes serovar 1/2a (strain ATCC BAA-679 / EGD-e)</name>
    <dbReference type="NCBI Taxonomy" id="169963"/>
    <lineage>
        <taxon>Bacteria</taxon>
        <taxon>Bacillati</taxon>
        <taxon>Bacillota</taxon>
        <taxon>Bacilli</taxon>
        <taxon>Bacillales</taxon>
        <taxon>Listeriaceae</taxon>
        <taxon>Listeria</taxon>
    </lineage>
</organism>
<reference key="1">
    <citation type="journal article" date="2001" name="Science">
        <title>Comparative genomics of Listeria species.</title>
        <authorList>
            <person name="Glaser P."/>
            <person name="Frangeul L."/>
            <person name="Buchrieser C."/>
            <person name="Rusniok C."/>
            <person name="Amend A."/>
            <person name="Baquero F."/>
            <person name="Berche P."/>
            <person name="Bloecker H."/>
            <person name="Brandt P."/>
            <person name="Chakraborty T."/>
            <person name="Charbit A."/>
            <person name="Chetouani F."/>
            <person name="Couve E."/>
            <person name="de Daruvar A."/>
            <person name="Dehoux P."/>
            <person name="Domann E."/>
            <person name="Dominguez-Bernal G."/>
            <person name="Duchaud E."/>
            <person name="Durant L."/>
            <person name="Dussurget O."/>
            <person name="Entian K.-D."/>
            <person name="Fsihi H."/>
            <person name="Garcia-del Portillo F."/>
            <person name="Garrido P."/>
            <person name="Gautier L."/>
            <person name="Goebel W."/>
            <person name="Gomez-Lopez N."/>
            <person name="Hain T."/>
            <person name="Hauf J."/>
            <person name="Jackson D."/>
            <person name="Jones L.-M."/>
            <person name="Kaerst U."/>
            <person name="Kreft J."/>
            <person name="Kuhn M."/>
            <person name="Kunst F."/>
            <person name="Kurapkat G."/>
            <person name="Madueno E."/>
            <person name="Maitournam A."/>
            <person name="Mata Vicente J."/>
            <person name="Ng E."/>
            <person name="Nedjari H."/>
            <person name="Nordsiek G."/>
            <person name="Novella S."/>
            <person name="de Pablos B."/>
            <person name="Perez-Diaz J.-C."/>
            <person name="Purcell R."/>
            <person name="Remmel B."/>
            <person name="Rose M."/>
            <person name="Schlueter T."/>
            <person name="Simoes N."/>
            <person name="Tierrez A."/>
            <person name="Vazquez-Boland J.-A."/>
            <person name="Voss H."/>
            <person name="Wehland J."/>
            <person name="Cossart P."/>
        </authorList>
    </citation>
    <scope>NUCLEOTIDE SEQUENCE [LARGE SCALE GENOMIC DNA]</scope>
    <source>
        <strain>ATCC BAA-679 / EGD-e</strain>
    </source>
</reference>
<protein>
    <recommendedName>
        <fullName>Dihydroorotate dehydrogenase B (NAD(+)), catalytic subunit</fullName>
        <shortName>DHOD B</shortName>
        <shortName>DHODase B</shortName>
        <shortName>DHOdehase B</shortName>
        <ecNumber>1.3.1.14</ecNumber>
    </recommendedName>
    <alternativeName>
        <fullName>Dihydroorotate oxidase B</fullName>
    </alternativeName>
    <alternativeName>
        <fullName>Orotate reductase (NADH)</fullName>
    </alternativeName>
</protein>
<accession>Q8Y667</accession>
<dbReference type="EC" id="1.3.1.14"/>
<dbReference type="EMBL" id="AL591981">
    <property type="protein sequence ID" value="CAC99911.1"/>
    <property type="molecule type" value="Genomic_DNA"/>
</dbReference>
<dbReference type="PIR" id="AI1303">
    <property type="entry name" value="AI1303"/>
</dbReference>
<dbReference type="RefSeq" id="NP_465358.1">
    <property type="nucleotide sequence ID" value="NC_003210.1"/>
</dbReference>
<dbReference type="RefSeq" id="WP_010989826.1">
    <property type="nucleotide sequence ID" value="NZ_CP149495.1"/>
</dbReference>
<dbReference type="SMR" id="Q8Y667"/>
<dbReference type="STRING" id="169963.gene:17594518"/>
<dbReference type="PaxDb" id="169963-lmo1833"/>
<dbReference type="EnsemblBacteria" id="CAC99911">
    <property type="protein sequence ID" value="CAC99911"/>
    <property type="gene ID" value="CAC99911"/>
</dbReference>
<dbReference type="GeneID" id="985875"/>
<dbReference type="KEGG" id="lmo:lmo1833"/>
<dbReference type="PATRIC" id="fig|169963.11.peg.1878"/>
<dbReference type="eggNOG" id="COG0167">
    <property type="taxonomic scope" value="Bacteria"/>
</dbReference>
<dbReference type="HOGENOM" id="CLU_042042_0_0_9"/>
<dbReference type="OrthoDB" id="9794954at2"/>
<dbReference type="PhylomeDB" id="Q8Y667"/>
<dbReference type="BioCyc" id="LMON169963:LMO1833-MONOMER"/>
<dbReference type="UniPathway" id="UPA00070">
    <property type="reaction ID" value="UER00945"/>
</dbReference>
<dbReference type="Proteomes" id="UP000000817">
    <property type="component" value="Chromosome"/>
</dbReference>
<dbReference type="GO" id="GO:0005737">
    <property type="term" value="C:cytoplasm"/>
    <property type="evidence" value="ECO:0000318"/>
    <property type="project" value="GO_Central"/>
</dbReference>
<dbReference type="GO" id="GO:0004589">
    <property type="term" value="F:dihydroorotate dehydrogenase (NAD+) activity"/>
    <property type="evidence" value="ECO:0007669"/>
    <property type="project" value="UniProtKB-EC"/>
</dbReference>
<dbReference type="GO" id="GO:0004152">
    <property type="term" value="F:dihydroorotate dehydrogenase activity"/>
    <property type="evidence" value="ECO:0000318"/>
    <property type="project" value="GO_Central"/>
</dbReference>
<dbReference type="GO" id="GO:0006207">
    <property type="term" value="P:'de novo' pyrimidine nucleobase biosynthetic process"/>
    <property type="evidence" value="ECO:0000318"/>
    <property type="project" value="GO_Central"/>
</dbReference>
<dbReference type="GO" id="GO:0044205">
    <property type="term" value="P:'de novo' UMP biosynthetic process"/>
    <property type="evidence" value="ECO:0007669"/>
    <property type="project" value="UniProtKB-UniRule"/>
</dbReference>
<dbReference type="CDD" id="cd04740">
    <property type="entry name" value="DHOD_1B_like"/>
    <property type="match status" value="1"/>
</dbReference>
<dbReference type="FunFam" id="3.20.20.70:FF:000069">
    <property type="entry name" value="Dihydroorotate dehydrogenase"/>
    <property type="match status" value="1"/>
</dbReference>
<dbReference type="Gene3D" id="3.20.20.70">
    <property type="entry name" value="Aldolase class I"/>
    <property type="match status" value="1"/>
</dbReference>
<dbReference type="HAMAP" id="MF_00224">
    <property type="entry name" value="DHO_dh_type1"/>
    <property type="match status" value="1"/>
</dbReference>
<dbReference type="InterPro" id="IPR013785">
    <property type="entry name" value="Aldolase_TIM"/>
</dbReference>
<dbReference type="InterPro" id="IPR050074">
    <property type="entry name" value="DHO_dehydrogenase"/>
</dbReference>
<dbReference type="InterPro" id="IPR033888">
    <property type="entry name" value="DHOD_1B"/>
</dbReference>
<dbReference type="InterPro" id="IPR024920">
    <property type="entry name" value="Dihydroorotate_DH_1"/>
</dbReference>
<dbReference type="InterPro" id="IPR012135">
    <property type="entry name" value="Dihydroorotate_DH_1_2"/>
</dbReference>
<dbReference type="InterPro" id="IPR005720">
    <property type="entry name" value="Dihydroorotate_DH_cat"/>
</dbReference>
<dbReference type="InterPro" id="IPR001295">
    <property type="entry name" value="Dihydroorotate_DH_CS"/>
</dbReference>
<dbReference type="InterPro" id="IPR049622">
    <property type="entry name" value="Dihydroorotate_DH_I"/>
</dbReference>
<dbReference type="NCBIfam" id="NF005574">
    <property type="entry name" value="PRK07259.1"/>
    <property type="match status" value="1"/>
</dbReference>
<dbReference type="NCBIfam" id="TIGR01037">
    <property type="entry name" value="pyrD_sub1_fam"/>
    <property type="match status" value="1"/>
</dbReference>
<dbReference type="PANTHER" id="PTHR48109:SF1">
    <property type="entry name" value="DIHYDROOROTATE DEHYDROGENASE (FUMARATE)"/>
    <property type="match status" value="1"/>
</dbReference>
<dbReference type="PANTHER" id="PTHR48109">
    <property type="entry name" value="DIHYDROOROTATE DEHYDROGENASE (QUINONE), MITOCHONDRIAL-RELATED"/>
    <property type="match status" value="1"/>
</dbReference>
<dbReference type="Pfam" id="PF01180">
    <property type="entry name" value="DHO_dh"/>
    <property type="match status" value="1"/>
</dbReference>
<dbReference type="PIRSF" id="PIRSF000164">
    <property type="entry name" value="DHO_oxidase"/>
    <property type="match status" value="1"/>
</dbReference>
<dbReference type="SUPFAM" id="SSF51395">
    <property type="entry name" value="FMN-linked oxidoreductases"/>
    <property type="match status" value="1"/>
</dbReference>
<dbReference type="PROSITE" id="PS00911">
    <property type="entry name" value="DHODEHASE_1"/>
    <property type="match status" value="1"/>
</dbReference>
<dbReference type="PROSITE" id="PS00912">
    <property type="entry name" value="DHODEHASE_2"/>
    <property type="match status" value="1"/>
</dbReference>